<evidence type="ECO:0000255" key="1">
    <source>
        <dbReference type="HAMAP-Rule" id="MF_00394"/>
    </source>
</evidence>
<organism>
    <name type="scientific">Acholeplasma laidlawii (strain PG-8A)</name>
    <dbReference type="NCBI Taxonomy" id="441768"/>
    <lineage>
        <taxon>Bacteria</taxon>
        <taxon>Bacillati</taxon>
        <taxon>Mycoplasmatota</taxon>
        <taxon>Mollicutes</taxon>
        <taxon>Acholeplasmatales</taxon>
        <taxon>Acholeplasmataceae</taxon>
        <taxon>Acholeplasma</taxon>
    </lineage>
</organism>
<dbReference type="EC" id="1.1.1.94" evidence="1"/>
<dbReference type="EMBL" id="CP000896">
    <property type="protein sequence ID" value="ABX81486.1"/>
    <property type="molecule type" value="Genomic_DNA"/>
</dbReference>
<dbReference type="RefSeq" id="WP_012242817.1">
    <property type="nucleotide sequence ID" value="NC_010163.1"/>
</dbReference>
<dbReference type="SMR" id="A9NGK6"/>
<dbReference type="STRING" id="441768.ACL_0873"/>
<dbReference type="GeneID" id="41339026"/>
<dbReference type="KEGG" id="acl:ACL_0873"/>
<dbReference type="eggNOG" id="COG0240">
    <property type="taxonomic scope" value="Bacteria"/>
</dbReference>
<dbReference type="HOGENOM" id="CLU_033449_0_2_14"/>
<dbReference type="UniPathway" id="UPA00940"/>
<dbReference type="Proteomes" id="UP000008558">
    <property type="component" value="Chromosome"/>
</dbReference>
<dbReference type="GO" id="GO:0005829">
    <property type="term" value="C:cytosol"/>
    <property type="evidence" value="ECO:0007669"/>
    <property type="project" value="TreeGrafter"/>
</dbReference>
<dbReference type="GO" id="GO:0047952">
    <property type="term" value="F:glycerol-3-phosphate dehydrogenase [NAD(P)+] activity"/>
    <property type="evidence" value="ECO:0007669"/>
    <property type="project" value="UniProtKB-UniRule"/>
</dbReference>
<dbReference type="GO" id="GO:0051287">
    <property type="term" value="F:NAD binding"/>
    <property type="evidence" value="ECO:0007669"/>
    <property type="project" value="InterPro"/>
</dbReference>
<dbReference type="GO" id="GO:0005975">
    <property type="term" value="P:carbohydrate metabolic process"/>
    <property type="evidence" value="ECO:0007669"/>
    <property type="project" value="InterPro"/>
</dbReference>
<dbReference type="GO" id="GO:0046167">
    <property type="term" value="P:glycerol-3-phosphate biosynthetic process"/>
    <property type="evidence" value="ECO:0007669"/>
    <property type="project" value="UniProtKB-UniRule"/>
</dbReference>
<dbReference type="GO" id="GO:0046168">
    <property type="term" value="P:glycerol-3-phosphate catabolic process"/>
    <property type="evidence" value="ECO:0007669"/>
    <property type="project" value="InterPro"/>
</dbReference>
<dbReference type="GO" id="GO:0006650">
    <property type="term" value="P:glycerophospholipid metabolic process"/>
    <property type="evidence" value="ECO:0007669"/>
    <property type="project" value="UniProtKB-UniRule"/>
</dbReference>
<dbReference type="GO" id="GO:0008654">
    <property type="term" value="P:phospholipid biosynthetic process"/>
    <property type="evidence" value="ECO:0007669"/>
    <property type="project" value="UniProtKB-KW"/>
</dbReference>
<dbReference type="FunFam" id="1.10.1040.10:FF:000001">
    <property type="entry name" value="Glycerol-3-phosphate dehydrogenase [NAD(P)+]"/>
    <property type="match status" value="1"/>
</dbReference>
<dbReference type="FunFam" id="3.40.50.720:FF:000019">
    <property type="entry name" value="Glycerol-3-phosphate dehydrogenase [NAD(P)+]"/>
    <property type="match status" value="1"/>
</dbReference>
<dbReference type="Gene3D" id="1.10.1040.10">
    <property type="entry name" value="N-(1-d-carboxylethyl)-l-norvaline Dehydrogenase, domain 2"/>
    <property type="match status" value="1"/>
</dbReference>
<dbReference type="Gene3D" id="3.40.50.720">
    <property type="entry name" value="NAD(P)-binding Rossmann-like Domain"/>
    <property type="match status" value="1"/>
</dbReference>
<dbReference type="HAMAP" id="MF_00394">
    <property type="entry name" value="NAD_Glyc3P_dehydrog"/>
    <property type="match status" value="1"/>
</dbReference>
<dbReference type="InterPro" id="IPR008927">
    <property type="entry name" value="6-PGluconate_DH-like_C_sf"/>
</dbReference>
<dbReference type="InterPro" id="IPR013328">
    <property type="entry name" value="6PGD_dom2"/>
</dbReference>
<dbReference type="InterPro" id="IPR006168">
    <property type="entry name" value="G3P_DH_NAD-dep"/>
</dbReference>
<dbReference type="InterPro" id="IPR006109">
    <property type="entry name" value="G3P_DH_NAD-dep_C"/>
</dbReference>
<dbReference type="InterPro" id="IPR011128">
    <property type="entry name" value="G3P_DH_NAD-dep_N"/>
</dbReference>
<dbReference type="InterPro" id="IPR036291">
    <property type="entry name" value="NAD(P)-bd_dom_sf"/>
</dbReference>
<dbReference type="NCBIfam" id="NF000940">
    <property type="entry name" value="PRK00094.1-2"/>
    <property type="match status" value="1"/>
</dbReference>
<dbReference type="NCBIfam" id="NF000942">
    <property type="entry name" value="PRK00094.1-4"/>
    <property type="match status" value="1"/>
</dbReference>
<dbReference type="PANTHER" id="PTHR11728">
    <property type="entry name" value="GLYCEROL-3-PHOSPHATE DEHYDROGENASE"/>
    <property type="match status" value="1"/>
</dbReference>
<dbReference type="PANTHER" id="PTHR11728:SF1">
    <property type="entry name" value="GLYCEROL-3-PHOSPHATE DEHYDROGENASE [NAD(+)] 2, CHLOROPLASTIC"/>
    <property type="match status" value="1"/>
</dbReference>
<dbReference type="Pfam" id="PF07479">
    <property type="entry name" value="NAD_Gly3P_dh_C"/>
    <property type="match status" value="1"/>
</dbReference>
<dbReference type="Pfam" id="PF01210">
    <property type="entry name" value="NAD_Gly3P_dh_N"/>
    <property type="match status" value="1"/>
</dbReference>
<dbReference type="PIRSF" id="PIRSF000114">
    <property type="entry name" value="Glycerol-3-P_dh"/>
    <property type="match status" value="1"/>
</dbReference>
<dbReference type="PRINTS" id="PR00077">
    <property type="entry name" value="GPDHDRGNASE"/>
</dbReference>
<dbReference type="SUPFAM" id="SSF48179">
    <property type="entry name" value="6-phosphogluconate dehydrogenase C-terminal domain-like"/>
    <property type="match status" value="1"/>
</dbReference>
<dbReference type="SUPFAM" id="SSF51735">
    <property type="entry name" value="NAD(P)-binding Rossmann-fold domains"/>
    <property type="match status" value="1"/>
</dbReference>
<sequence>MKISVIGGGSWGTTLAQVLTDNGHETLIYDVNPEAVKKINNNIHPFFDNKITGIRATLDLKESIDYADYILLAVPTKFMRDSLRDINKLATRKLYFINVSKGIEPVTLKRVSEIVTDEITPELLGAYAVLTGPSHAEEVIERKLTVLTAASDVEWFRKSVQQLFSNQSYLRVYTSDDLIGCEVGGAIKNAIAIVSGMMTGYGLGENARAALITRGILEIVRVVVHYGGKKETAFGLTGIGDLIVTASSYNSRNFNAGLKIGQGTPVEQVLSESKMVVEGVRAIQAAKDLCVQTGIELPIIEITYEVIFNNMSVKEAIQNLLTRELKEEVIA</sequence>
<gene>
    <name evidence="1" type="primary">gpsA</name>
    <name type="ordered locus">ACL_0873</name>
</gene>
<comment type="function">
    <text evidence="1">Catalyzes the reduction of the glycolytic intermediate dihydroxyacetone phosphate (DHAP) to sn-glycerol 3-phosphate (G3P), the key precursor for phospholipid synthesis.</text>
</comment>
<comment type="catalytic activity">
    <reaction evidence="1">
        <text>sn-glycerol 3-phosphate + NAD(+) = dihydroxyacetone phosphate + NADH + H(+)</text>
        <dbReference type="Rhea" id="RHEA:11092"/>
        <dbReference type="ChEBI" id="CHEBI:15378"/>
        <dbReference type="ChEBI" id="CHEBI:57540"/>
        <dbReference type="ChEBI" id="CHEBI:57597"/>
        <dbReference type="ChEBI" id="CHEBI:57642"/>
        <dbReference type="ChEBI" id="CHEBI:57945"/>
        <dbReference type="EC" id="1.1.1.94"/>
    </reaction>
    <physiologicalReaction direction="right-to-left" evidence="1">
        <dbReference type="Rhea" id="RHEA:11094"/>
    </physiologicalReaction>
</comment>
<comment type="catalytic activity">
    <reaction evidence="1">
        <text>sn-glycerol 3-phosphate + NADP(+) = dihydroxyacetone phosphate + NADPH + H(+)</text>
        <dbReference type="Rhea" id="RHEA:11096"/>
        <dbReference type="ChEBI" id="CHEBI:15378"/>
        <dbReference type="ChEBI" id="CHEBI:57597"/>
        <dbReference type="ChEBI" id="CHEBI:57642"/>
        <dbReference type="ChEBI" id="CHEBI:57783"/>
        <dbReference type="ChEBI" id="CHEBI:58349"/>
        <dbReference type="EC" id="1.1.1.94"/>
    </reaction>
    <physiologicalReaction direction="right-to-left" evidence="1">
        <dbReference type="Rhea" id="RHEA:11098"/>
    </physiologicalReaction>
</comment>
<comment type="pathway">
    <text evidence="1">Membrane lipid metabolism; glycerophospholipid metabolism.</text>
</comment>
<comment type="subcellular location">
    <subcellularLocation>
        <location evidence="1">Cytoplasm</location>
    </subcellularLocation>
</comment>
<comment type="similarity">
    <text evidence="1">Belongs to the NAD-dependent glycerol-3-phosphate dehydrogenase family.</text>
</comment>
<feature type="chain" id="PRO_1000080296" description="Glycerol-3-phosphate dehydrogenase [NAD(P)+]">
    <location>
        <begin position="1"/>
        <end position="331"/>
    </location>
</feature>
<feature type="active site" description="Proton acceptor" evidence="1">
    <location>
        <position position="188"/>
    </location>
</feature>
<feature type="binding site" evidence="1">
    <location>
        <position position="10"/>
    </location>
    <ligand>
        <name>NADPH</name>
        <dbReference type="ChEBI" id="CHEBI:57783"/>
    </ligand>
</feature>
<feature type="binding site" evidence="1">
    <location>
        <position position="11"/>
    </location>
    <ligand>
        <name>NADPH</name>
        <dbReference type="ChEBI" id="CHEBI:57783"/>
    </ligand>
</feature>
<feature type="binding site" evidence="1">
    <location>
        <position position="101"/>
    </location>
    <ligand>
        <name>NADPH</name>
        <dbReference type="ChEBI" id="CHEBI:57783"/>
    </ligand>
</feature>
<feature type="binding site" evidence="1">
    <location>
        <position position="101"/>
    </location>
    <ligand>
        <name>sn-glycerol 3-phosphate</name>
        <dbReference type="ChEBI" id="CHEBI:57597"/>
    </ligand>
</feature>
<feature type="binding site" evidence="1">
    <location>
        <position position="132"/>
    </location>
    <ligand>
        <name>sn-glycerol 3-phosphate</name>
        <dbReference type="ChEBI" id="CHEBI:57597"/>
    </ligand>
</feature>
<feature type="binding site" evidence="1">
    <location>
        <position position="134"/>
    </location>
    <ligand>
        <name>sn-glycerol 3-phosphate</name>
        <dbReference type="ChEBI" id="CHEBI:57597"/>
    </ligand>
</feature>
<feature type="binding site" evidence="1">
    <location>
        <position position="136"/>
    </location>
    <ligand>
        <name>NADPH</name>
        <dbReference type="ChEBI" id="CHEBI:57783"/>
    </ligand>
</feature>
<feature type="binding site" evidence="1">
    <location>
        <position position="188"/>
    </location>
    <ligand>
        <name>sn-glycerol 3-phosphate</name>
        <dbReference type="ChEBI" id="CHEBI:57597"/>
    </ligand>
</feature>
<feature type="binding site" evidence="1">
    <location>
        <position position="241"/>
    </location>
    <ligand>
        <name>sn-glycerol 3-phosphate</name>
        <dbReference type="ChEBI" id="CHEBI:57597"/>
    </ligand>
</feature>
<feature type="binding site" evidence="1">
    <location>
        <position position="251"/>
    </location>
    <ligand>
        <name>sn-glycerol 3-phosphate</name>
        <dbReference type="ChEBI" id="CHEBI:57597"/>
    </ligand>
</feature>
<feature type="binding site" evidence="1">
    <location>
        <position position="252"/>
    </location>
    <ligand>
        <name>NADPH</name>
        <dbReference type="ChEBI" id="CHEBI:57783"/>
    </ligand>
</feature>
<feature type="binding site" evidence="1">
    <location>
        <position position="252"/>
    </location>
    <ligand>
        <name>sn-glycerol 3-phosphate</name>
        <dbReference type="ChEBI" id="CHEBI:57597"/>
    </ligand>
</feature>
<feature type="binding site" evidence="1">
    <location>
        <position position="253"/>
    </location>
    <ligand>
        <name>sn-glycerol 3-phosphate</name>
        <dbReference type="ChEBI" id="CHEBI:57597"/>
    </ligand>
</feature>
<feature type="binding site" evidence="1">
    <location>
        <position position="276"/>
    </location>
    <ligand>
        <name>NADPH</name>
        <dbReference type="ChEBI" id="CHEBI:57783"/>
    </ligand>
</feature>
<feature type="binding site" evidence="1">
    <location>
        <position position="278"/>
    </location>
    <ligand>
        <name>NADPH</name>
        <dbReference type="ChEBI" id="CHEBI:57783"/>
    </ligand>
</feature>
<reference key="1">
    <citation type="journal article" date="2011" name="J. Bacteriol.">
        <title>Complete genome and proteome of Acholeplasma laidlawii.</title>
        <authorList>
            <person name="Lazarev V.N."/>
            <person name="Levitskii S.A."/>
            <person name="Basovskii Y.I."/>
            <person name="Chukin M.M."/>
            <person name="Akopian T.A."/>
            <person name="Vereshchagin V.V."/>
            <person name="Kostrjukova E.S."/>
            <person name="Kovaleva G.Y."/>
            <person name="Kazanov M.D."/>
            <person name="Malko D.B."/>
            <person name="Vitreschak A.G."/>
            <person name="Sernova N.V."/>
            <person name="Gelfand M.S."/>
            <person name="Demina I.A."/>
            <person name="Serebryakova M.V."/>
            <person name="Galyamina M.A."/>
            <person name="Vtyurin N.N."/>
            <person name="Rogov S.I."/>
            <person name="Alexeev D.G."/>
            <person name="Ladygina V.G."/>
            <person name="Govorun V.M."/>
        </authorList>
    </citation>
    <scope>NUCLEOTIDE SEQUENCE [LARGE SCALE GENOMIC DNA]</scope>
    <source>
        <strain>PG-8A</strain>
    </source>
</reference>
<protein>
    <recommendedName>
        <fullName evidence="1">Glycerol-3-phosphate dehydrogenase [NAD(P)+]</fullName>
        <ecNumber evidence="1">1.1.1.94</ecNumber>
    </recommendedName>
    <alternativeName>
        <fullName evidence="1">NAD(P)(+)-dependent glycerol-3-phosphate dehydrogenase</fullName>
    </alternativeName>
    <alternativeName>
        <fullName evidence="1">NAD(P)H-dependent dihydroxyacetone-phosphate reductase</fullName>
    </alternativeName>
</protein>
<name>GPDA_ACHLI</name>
<proteinExistence type="inferred from homology"/>
<keyword id="KW-0963">Cytoplasm</keyword>
<keyword id="KW-0444">Lipid biosynthesis</keyword>
<keyword id="KW-0443">Lipid metabolism</keyword>
<keyword id="KW-0520">NAD</keyword>
<keyword id="KW-0521">NADP</keyword>
<keyword id="KW-0547">Nucleotide-binding</keyword>
<keyword id="KW-0560">Oxidoreductase</keyword>
<keyword id="KW-0594">Phospholipid biosynthesis</keyword>
<keyword id="KW-1208">Phospholipid metabolism</keyword>
<keyword id="KW-1185">Reference proteome</keyword>
<accession>A9NGK6</accession>